<proteinExistence type="inferred from homology"/>
<name>PLSX_STAA1</name>
<dbReference type="EC" id="2.3.1.274" evidence="1"/>
<dbReference type="EMBL" id="AP009324">
    <property type="protein sequence ID" value="BAF78102.1"/>
    <property type="molecule type" value="Genomic_DNA"/>
</dbReference>
<dbReference type="RefSeq" id="WP_000239753.1">
    <property type="nucleotide sequence ID" value="NC_009782.1"/>
</dbReference>
<dbReference type="SMR" id="A7X1J3"/>
<dbReference type="KEGG" id="saw:SAHV_1219"/>
<dbReference type="HOGENOM" id="CLU_039379_1_1_9"/>
<dbReference type="UniPathway" id="UPA00085"/>
<dbReference type="GO" id="GO:0005737">
    <property type="term" value="C:cytoplasm"/>
    <property type="evidence" value="ECO:0007669"/>
    <property type="project" value="UniProtKB-SubCell"/>
</dbReference>
<dbReference type="GO" id="GO:0043811">
    <property type="term" value="F:phosphate:acyl-[acyl carrier protein] acyltransferase activity"/>
    <property type="evidence" value="ECO:0007669"/>
    <property type="project" value="UniProtKB-UniRule"/>
</dbReference>
<dbReference type="GO" id="GO:0006633">
    <property type="term" value="P:fatty acid biosynthetic process"/>
    <property type="evidence" value="ECO:0007669"/>
    <property type="project" value="UniProtKB-UniRule"/>
</dbReference>
<dbReference type="GO" id="GO:0008654">
    <property type="term" value="P:phospholipid biosynthetic process"/>
    <property type="evidence" value="ECO:0007669"/>
    <property type="project" value="UniProtKB-KW"/>
</dbReference>
<dbReference type="Gene3D" id="3.40.718.10">
    <property type="entry name" value="Isopropylmalate Dehydrogenase"/>
    <property type="match status" value="1"/>
</dbReference>
<dbReference type="HAMAP" id="MF_00019">
    <property type="entry name" value="PlsX"/>
    <property type="match status" value="1"/>
</dbReference>
<dbReference type="InterPro" id="IPR003664">
    <property type="entry name" value="FA_synthesis"/>
</dbReference>
<dbReference type="InterPro" id="IPR012281">
    <property type="entry name" value="Phospholipid_synth_PlsX-like"/>
</dbReference>
<dbReference type="NCBIfam" id="TIGR00182">
    <property type="entry name" value="plsX"/>
    <property type="match status" value="1"/>
</dbReference>
<dbReference type="PANTHER" id="PTHR30100">
    <property type="entry name" value="FATTY ACID/PHOSPHOLIPID SYNTHESIS PROTEIN PLSX"/>
    <property type="match status" value="1"/>
</dbReference>
<dbReference type="PANTHER" id="PTHR30100:SF1">
    <property type="entry name" value="PHOSPHATE ACYLTRANSFERASE"/>
    <property type="match status" value="1"/>
</dbReference>
<dbReference type="Pfam" id="PF02504">
    <property type="entry name" value="FA_synthesis"/>
    <property type="match status" value="1"/>
</dbReference>
<dbReference type="PIRSF" id="PIRSF002465">
    <property type="entry name" value="Phsphlp_syn_PlsX"/>
    <property type="match status" value="1"/>
</dbReference>
<dbReference type="SUPFAM" id="SSF53659">
    <property type="entry name" value="Isocitrate/Isopropylmalate dehydrogenase-like"/>
    <property type="match status" value="1"/>
</dbReference>
<keyword id="KW-0963">Cytoplasm</keyword>
<keyword id="KW-0444">Lipid biosynthesis</keyword>
<keyword id="KW-0443">Lipid metabolism</keyword>
<keyword id="KW-0594">Phospholipid biosynthesis</keyword>
<keyword id="KW-1208">Phospholipid metabolism</keyword>
<keyword id="KW-0808">Transferase</keyword>
<sequence length="328" mass="35451">MVKLAIDMMGGDNAPDIVLEAVQKAVEDFKNLEIMLFGDEKKYNLNHERIEFRHCSEKIEMEDEPVRAIKRKKDSSMVKMAEAVKSGEADGCVSAGNTGALMSVGLFIVGRIKGVARPALVVTLPTIDGKGFVFLDVGANADAKPEHLLQYAQLGDIYAQKIRGIDNPKISLLNIGTEPAKGNSLTKKSFELLNQDHSLNFVGNIEAKTLMDGDTDVVVTDGYTGNMVLKNLEGTAKSIGKMLKDTIMSSTKNKLAGAILKKDLAEFAKKMDYSEYGGSVLLGLEGTVVKAHGSSNAKAFYSAIRQAKIAGEQNIVQTMKETVGESNE</sequence>
<comment type="function">
    <text evidence="1">Catalyzes the reversible formation of acyl-phosphate (acyl-PO(4)) from acyl-[acyl-carrier-protein] (acyl-ACP). This enzyme utilizes acyl-ACP as fatty acyl donor, but not acyl-CoA.</text>
</comment>
<comment type="catalytic activity">
    <reaction evidence="1">
        <text>a fatty acyl-[ACP] + phosphate = an acyl phosphate + holo-[ACP]</text>
        <dbReference type="Rhea" id="RHEA:42292"/>
        <dbReference type="Rhea" id="RHEA-COMP:9685"/>
        <dbReference type="Rhea" id="RHEA-COMP:14125"/>
        <dbReference type="ChEBI" id="CHEBI:43474"/>
        <dbReference type="ChEBI" id="CHEBI:59918"/>
        <dbReference type="ChEBI" id="CHEBI:64479"/>
        <dbReference type="ChEBI" id="CHEBI:138651"/>
        <dbReference type="EC" id="2.3.1.274"/>
    </reaction>
</comment>
<comment type="pathway">
    <text evidence="1">Lipid metabolism; phospholipid metabolism.</text>
</comment>
<comment type="subunit">
    <text evidence="1">Homodimer. Probably interacts with PlsY.</text>
</comment>
<comment type="subcellular location">
    <subcellularLocation>
        <location evidence="1">Cytoplasm</location>
    </subcellularLocation>
    <text evidence="1">Associated with the membrane possibly through PlsY.</text>
</comment>
<comment type="similarity">
    <text evidence="1">Belongs to the PlsX family.</text>
</comment>
<gene>
    <name evidence="1" type="primary">plsX</name>
    <name type="ordered locus">SAHV_1219</name>
</gene>
<accession>A7X1J3</accession>
<reference key="1">
    <citation type="journal article" date="2008" name="Antimicrob. Agents Chemother.">
        <title>Mutated response regulator graR is responsible for phenotypic conversion of Staphylococcus aureus from heterogeneous vancomycin-intermediate resistance to vancomycin-intermediate resistance.</title>
        <authorList>
            <person name="Neoh H.-M."/>
            <person name="Cui L."/>
            <person name="Yuzawa H."/>
            <person name="Takeuchi F."/>
            <person name="Matsuo M."/>
            <person name="Hiramatsu K."/>
        </authorList>
    </citation>
    <scope>NUCLEOTIDE SEQUENCE [LARGE SCALE GENOMIC DNA]</scope>
    <source>
        <strain>Mu3 / ATCC 700698</strain>
    </source>
</reference>
<protein>
    <recommendedName>
        <fullName evidence="1">Phosphate acyltransferase</fullName>
        <ecNumber evidence="1">2.3.1.274</ecNumber>
    </recommendedName>
    <alternativeName>
        <fullName evidence="1">Acyl-ACP phosphotransacylase</fullName>
    </alternativeName>
    <alternativeName>
        <fullName evidence="1">Acyl-[acyl-carrier-protein]--phosphate acyltransferase</fullName>
    </alternativeName>
    <alternativeName>
        <fullName evidence="1">Phosphate-acyl-ACP acyltransferase</fullName>
    </alternativeName>
</protein>
<organism>
    <name type="scientific">Staphylococcus aureus (strain Mu3 / ATCC 700698)</name>
    <dbReference type="NCBI Taxonomy" id="418127"/>
    <lineage>
        <taxon>Bacteria</taxon>
        <taxon>Bacillati</taxon>
        <taxon>Bacillota</taxon>
        <taxon>Bacilli</taxon>
        <taxon>Bacillales</taxon>
        <taxon>Staphylococcaceae</taxon>
        <taxon>Staphylococcus</taxon>
    </lineage>
</organism>
<feature type="chain" id="PRO_1000001836" description="Phosphate acyltransferase">
    <location>
        <begin position="1"/>
        <end position="328"/>
    </location>
</feature>
<evidence type="ECO:0000255" key="1">
    <source>
        <dbReference type="HAMAP-Rule" id="MF_00019"/>
    </source>
</evidence>